<name>EDD_RHIME</name>
<reference key="1">
    <citation type="journal article" date="1999" name="J. Bacteriol.">
        <title>A novel Sinorhizobium meliloti operon encodes an alpha-glucosidase and a periplasmic-binding-protein-dependent transport system for alpha-glucosides.</title>
        <authorList>
            <person name="Willis L.B."/>
            <person name="Walker G.C."/>
        </authorList>
    </citation>
    <scope>NUCLEOTIDE SEQUENCE [GENOMIC DNA]</scope>
</reference>
<reference key="2">
    <citation type="journal article" date="2001" name="Proc. Natl. Acad. Sci. U.S.A.">
        <title>Analysis of the chromosome sequence of the legume symbiont Sinorhizobium meliloti strain 1021.</title>
        <authorList>
            <person name="Capela D."/>
            <person name="Barloy-Hubler F."/>
            <person name="Gouzy J."/>
            <person name="Bothe G."/>
            <person name="Ampe F."/>
            <person name="Batut J."/>
            <person name="Boistard P."/>
            <person name="Becker A."/>
            <person name="Boutry M."/>
            <person name="Cadieu E."/>
            <person name="Dreano S."/>
            <person name="Gloux S."/>
            <person name="Godrie T."/>
            <person name="Goffeau A."/>
            <person name="Kahn D."/>
            <person name="Kiss E."/>
            <person name="Lelaure V."/>
            <person name="Masuy D."/>
            <person name="Pohl T."/>
            <person name="Portetelle D."/>
            <person name="Puehler A."/>
            <person name="Purnelle B."/>
            <person name="Ramsperger U."/>
            <person name="Renard C."/>
            <person name="Thebault P."/>
            <person name="Vandenbol M."/>
            <person name="Weidner S."/>
            <person name="Galibert F."/>
        </authorList>
    </citation>
    <scope>NUCLEOTIDE SEQUENCE [LARGE SCALE GENOMIC DNA]</scope>
    <source>
        <strain>1021</strain>
    </source>
</reference>
<reference key="3">
    <citation type="journal article" date="2001" name="Science">
        <title>The composite genome of the legume symbiont Sinorhizobium meliloti.</title>
        <authorList>
            <person name="Galibert F."/>
            <person name="Finan T.M."/>
            <person name="Long S.R."/>
            <person name="Puehler A."/>
            <person name="Abola P."/>
            <person name="Ampe F."/>
            <person name="Barloy-Hubler F."/>
            <person name="Barnett M.J."/>
            <person name="Becker A."/>
            <person name="Boistard P."/>
            <person name="Bothe G."/>
            <person name="Boutry M."/>
            <person name="Bowser L."/>
            <person name="Buhrmester J."/>
            <person name="Cadieu E."/>
            <person name="Capela D."/>
            <person name="Chain P."/>
            <person name="Cowie A."/>
            <person name="Davis R.W."/>
            <person name="Dreano S."/>
            <person name="Federspiel N.A."/>
            <person name="Fisher R.F."/>
            <person name="Gloux S."/>
            <person name="Godrie T."/>
            <person name="Goffeau A."/>
            <person name="Golding B."/>
            <person name="Gouzy J."/>
            <person name="Gurjal M."/>
            <person name="Hernandez-Lucas I."/>
            <person name="Hong A."/>
            <person name="Huizar L."/>
            <person name="Hyman R.W."/>
            <person name="Jones T."/>
            <person name="Kahn D."/>
            <person name="Kahn M.L."/>
            <person name="Kalman S."/>
            <person name="Keating D.H."/>
            <person name="Kiss E."/>
            <person name="Komp C."/>
            <person name="Lelaure V."/>
            <person name="Masuy D."/>
            <person name="Palm C."/>
            <person name="Peck M.C."/>
            <person name="Pohl T.M."/>
            <person name="Portetelle D."/>
            <person name="Purnelle B."/>
            <person name="Ramsperger U."/>
            <person name="Surzycki R."/>
            <person name="Thebault P."/>
            <person name="Vandenbol M."/>
            <person name="Vorhoelter F.J."/>
            <person name="Weidner S."/>
            <person name="Wells D.H."/>
            <person name="Wong K."/>
            <person name="Yeh K.-C."/>
            <person name="Batut J."/>
        </authorList>
    </citation>
    <scope>NUCLEOTIDE SEQUENCE [LARGE SCALE GENOMIC DNA]</scope>
    <source>
        <strain>1021</strain>
    </source>
</reference>
<keyword id="KW-0004">4Fe-4S</keyword>
<keyword id="KW-0119">Carbohydrate metabolism</keyword>
<keyword id="KW-0311">Gluconate utilization</keyword>
<keyword id="KW-0408">Iron</keyword>
<keyword id="KW-0411">Iron-sulfur</keyword>
<keyword id="KW-0456">Lyase</keyword>
<keyword id="KW-0479">Metal-binding</keyword>
<keyword id="KW-1185">Reference proteome</keyword>
<protein>
    <recommendedName>
        <fullName evidence="1">Phosphogluconate dehydratase</fullName>
        <ecNumber evidence="1">4.2.1.12</ecNumber>
    </recommendedName>
</protein>
<gene>
    <name evidence="1 2" type="primary">edd</name>
    <name type="ordered locus">R00702</name>
    <name type="ORF">SMc03068</name>
</gene>
<proteinExistence type="inferred from homology"/>
<evidence type="ECO:0000255" key="1">
    <source>
        <dbReference type="HAMAP-Rule" id="MF_02094"/>
    </source>
</evidence>
<evidence type="ECO:0000303" key="2">
    <source>
    </source>
</evidence>
<evidence type="ECO:0000305" key="3"/>
<accession>Q9Z3S0</accession>
<feature type="chain" id="PRO_0000103558" description="Phosphogluconate dehydratase">
    <location>
        <begin position="1"/>
        <end position="606"/>
    </location>
</feature>
<feature type="binding site" evidence="1">
    <location>
        <position position="156"/>
    </location>
    <ligand>
        <name>[4Fe-4S] cluster</name>
        <dbReference type="ChEBI" id="CHEBI:49883"/>
    </ligand>
</feature>
<feature type="binding site" evidence="1">
    <location>
        <position position="223"/>
    </location>
    <ligand>
        <name>[4Fe-4S] cluster</name>
        <dbReference type="ChEBI" id="CHEBI:49883"/>
    </ligand>
</feature>
<dbReference type="EC" id="4.2.1.12" evidence="1"/>
<dbReference type="EMBL" id="AF045609">
    <property type="protein sequence ID" value="AAD12045.1"/>
    <property type="molecule type" value="Genomic_DNA"/>
</dbReference>
<dbReference type="EMBL" id="AL591688">
    <property type="protein sequence ID" value="CAC45274.1"/>
    <property type="molecule type" value="Genomic_DNA"/>
</dbReference>
<dbReference type="RefSeq" id="NP_384808.1">
    <property type="nucleotide sequence ID" value="NC_003047.1"/>
</dbReference>
<dbReference type="RefSeq" id="WP_003527052.1">
    <property type="nucleotide sequence ID" value="NC_003047.1"/>
</dbReference>
<dbReference type="SMR" id="Q9Z3S0"/>
<dbReference type="EnsemblBacteria" id="CAC45274">
    <property type="protein sequence ID" value="CAC45274"/>
    <property type="gene ID" value="SMc03068"/>
</dbReference>
<dbReference type="KEGG" id="sme:SMc03068"/>
<dbReference type="PATRIC" id="fig|266834.11.peg.2078"/>
<dbReference type="eggNOG" id="COG0129">
    <property type="taxonomic scope" value="Bacteria"/>
</dbReference>
<dbReference type="HOGENOM" id="CLU_014271_1_2_5"/>
<dbReference type="OrthoDB" id="9807077at2"/>
<dbReference type="UniPathway" id="UPA00226"/>
<dbReference type="Proteomes" id="UP000001976">
    <property type="component" value="Chromosome"/>
</dbReference>
<dbReference type="GO" id="GO:0005829">
    <property type="term" value="C:cytosol"/>
    <property type="evidence" value="ECO:0007669"/>
    <property type="project" value="TreeGrafter"/>
</dbReference>
<dbReference type="GO" id="GO:0051539">
    <property type="term" value="F:4 iron, 4 sulfur cluster binding"/>
    <property type="evidence" value="ECO:0007669"/>
    <property type="project" value="UniProtKB-UniRule"/>
</dbReference>
<dbReference type="GO" id="GO:0046872">
    <property type="term" value="F:metal ion binding"/>
    <property type="evidence" value="ECO:0007669"/>
    <property type="project" value="UniProtKB-KW"/>
</dbReference>
<dbReference type="GO" id="GO:0004456">
    <property type="term" value="F:phosphogluconate dehydratase activity"/>
    <property type="evidence" value="ECO:0007669"/>
    <property type="project" value="UniProtKB-UniRule"/>
</dbReference>
<dbReference type="GO" id="GO:0019521">
    <property type="term" value="P:D-gluconate metabolic process"/>
    <property type="evidence" value="ECO:0007669"/>
    <property type="project" value="UniProtKB-KW"/>
</dbReference>
<dbReference type="GO" id="GO:0009255">
    <property type="term" value="P:Entner-Doudoroff pathway through 6-phosphogluconate"/>
    <property type="evidence" value="ECO:0007669"/>
    <property type="project" value="UniProtKB-UniRule"/>
</dbReference>
<dbReference type="FunFam" id="3.50.30.80:FF:000001">
    <property type="entry name" value="Dihydroxy-acid dehydratase"/>
    <property type="match status" value="1"/>
</dbReference>
<dbReference type="Gene3D" id="3.50.30.80">
    <property type="entry name" value="IlvD/EDD C-terminal domain-like"/>
    <property type="match status" value="1"/>
</dbReference>
<dbReference type="HAMAP" id="MF_02094">
    <property type="entry name" value="Edd"/>
    <property type="match status" value="1"/>
</dbReference>
<dbReference type="InterPro" id="IPR004786">
    <property type="entry name" value="6-phosphgluc_deHydtase"/>
</dbReference>
<dbReference type="InterPro" id="IPR042096">
    <property type="entry name" value="Dihydro-acid_dehy_C"/>
</dbReference>
<dbReference type="InterPro" id="IPR020558">
    <property type="entry name" value="DiOHA_6PGluconate_deHydtase_CS"/>
</dbReference>
<dbReference type="InterPro" id="IPR056740">
    <property type="entry name" value="ILV_EDD_C"/>
</dbReference>
<dbReference type="InterPro" id="IPR000581">
    <property type="entry name" value="ILV_EDD_N"/>
</dbReference>
<dbReference type="InterPro" id="IPR037237">
    <property type="entry name" value="IlvD/EDD_N"/>
</dbReference>
<dbReference type="NCBIfam" id="TIGR01196">
    <property type="entry name" value="edd"/>
    <property type="match status" value="1"/>
</dbReference>
<dbReference type="PANTHER" id="PTHR43661">
    <property type="entry name" value="D-XYLONATE DEHYDRATASE"/>
    <property type="match status" value="1"/>
</dbReference>
<dbReference type="PANTHER" id="PTHR43661:SF1">
    <property type="entry name" value="PHOSPHOGLUCONATE DEHYDRATASE"/>
    <property type="match status" value="1"/>
</dbReference>
<dbReference type="Pfam" id="PF24877">
    <property type="entry name" value="ILV_EDD_C"/>
    <property type="match status" value="1"/>
</dbReference>
<dbReference type="Pfam" id="PF00920">
    <property type="entry name" value="ILVD_EDD_N"/>
    <property type="match status" value="1"/>
</dbReference>
<dbReference type="SUPFAM" id="SSF143975">
    <property type="entry name" value="IlvD/EDD N-terminal domain-like"/>
    <property type="match status" value="1"/>
</dbReference>
<dbReference type="SUPFAM" id="SSF52016">
    <property type="entry name" value="LeuD/IlvD-like"/>
    <property type="match status" value="1"/>
</dbReference>
<dbReference type="PROSITE" id="PS00886">
    <property type="entry name" value="ILVD_EDD_1"/>
    <property type="match status" value="1"/>
</dbReference>
<dbReference type="PROSITE" id="PS00887">
    <property type="entry name" value="ILVD_EDD_2"/>
    <property type="match status" value="1"/>
</dbReference>
<sequence>MSADSRIAAITARIVERSKPYREPYLDRVRSAATNGPHRTVLGCGNLAHGFAVCSPAEKVALAGDRVPNLGIITSYNDMLSAHQPFETYPALIREAAHEAGGVAQVAGGVPAMCDGVTQGQPGMELSLFSRDVIAMAAGIGLSHNMFDAAVYLGVCDKIVPGLAIAALTFGHLPAVFIPAGPMTTGLPNDEKAKVRQLFAEGKVGRDELLEAESKSYHGPGTCTFYGTANSNQMLMEIMGFHLPGASFINPGTPLRDALTREATKRALAITALGNEFTPAGEMIDERSIVNGVVGLHATGGSTNHTMHLVAMARAAGIVLTWQDISELSDLVPLLARVYPNGLADVNHFHAAGGMGFLIAQLLRKGLLHDDVRTVYGQGLSAYAIDVKLGENGSVKREPAPEASADPKVLATVDRPFQHTGGLKMLSGNIGKAVIKISAVKPESHVIEAPAKIFNDQAELNAAFKAGKLEGDFVAVVRFQGPKANGMPELHKLTTVLGILQDRGQKVAILTDGRMSGASGKVPAAIHVTPEAKEGGPIARIQEGDIVRIDAINGKVEVLVEDIALKTRVPAHIDLSDNEFGMGRELFAPFRQIAGAADRGGSVLFH</sequence>
<organism>
    <name type="scientific">Rhizobium meliloti (strain 1021)</name>
    <name type="common">Ensifer meliloti</name>
    <name type="synonym">Sinorhizobium meliloti</name>
    <dbReference type="NCBI Taxonomy" id="266834"/>
    <lineage>
        <taxon>Bacteria</taxon>
        <taxon>Pseudomonadati</taxon>
        <taxon>Pseudomonadota</taxon>
        <taxon>Alphaproteobacteria</taxon>
        <taxon>Hyphomicrobiales</taxon>
        <taxon>Rhizobiaceae</taxon>
        <taxon>Sinorhizobium/Ensifer group</taxon>
        <taxon>Sinorhizobium</taxon>
    </lineage>
</organism>
<comment type="function">
    <text evidence="1">Catalyzes the dehydration of 6-phospho-D-gluconate to 2-dehydro-3-deoxy-6-phospho-D-gluconate.</text>
</comment>
<comment type="catalytic activity">
    <reaction evidence="1">
        <text>6-phospho-D-gluconate = 2-dehydro-3-deoxy-6-phospho-D-gluconate + H2O</text>
        <dbReference type="Rhea" id="RHEA:17277"/>
        <dbReference type="ChEBI" id="CHEBI:15377"/>
        <dbReference type="ChEBI" id="CHEBI:57569"/>
        <dbReference type="ChEBI" id="CHEBI:58759"/>
        <dbReference type="EC" id="4.2.1.12"/>
    </reaction>
</comment>
<comment type="cofactor">
    <cofactor evidence="1">
        <name>[4Fe-4S] cluster</name>
        <dbReference type="ChEBI" id="CHEBI:49883"/>
    </cofactor>
    <text evidence="1">Binds 1 [4Fe-4S] cluster.</text>
</comment>
<comment type="pathway">
    <text evidence="1">Carbohydrate metabolism; Entner-Doudoroff pathway.</text>
</comment>
<comment type="similarity">
    <text evidence="1 3">Belongs to the IlvD/Edd family.</text>
</comment>